<accession>Q8CGC4</accession>
<accession>A2AC71</accession>
<comment type="function">
    <text evidence="1 6 7 8 9 10">mRNA-binding protein essential for female fertility, oocyte meiotic maturation and the assembly of MARDO (mitochondria-associated ribonucleoprotein domain), a membraneless compartment that stores maternal mRNAs in oocytes (PubMed:28458300, PubMed:37083226, PubMed:37481122, PubMed:37578641, PubMed:37889087). Ensures the proper accumulation and clearance of mRNAs essential for oocyte meiotic maturation and the normal progression from Meiosis I to Meiosis II in oocytes (PubMed:37083226, PubMed:37481122, PubMed:37578641, PubMed:37889087). Promotes the translation of some oogenesis-related mRNAs (PubMed:37083226, PubMed:37578641). Regulates the expression and/or localization of some key P-body proteins in oocytes (PubMed:37481122). Essential for the assembly of the primordial follicle in the ovary (PubMed:37578641).</text>
</comment>
<comment type="subunit">
    <text evidence="7">Component of a ribonucleoprotein (RNP) complex.</text>
</comment>
<comment type="subcellular location">
    <subcellularLocation>
        <location evidence="7 9 10">Cytoplasm</location>
        <location evidence="7 9 10">Cytoplasmic ribonucleoprotein granule</location>
    </subcellularLocation>
    <text evidence="9 10">Localizes to MARDO (mitochondria-associated ribonucleoprotein domain), a mitochondria-associated membraneless compartment that stores mRNAs in oocytes.</text>
</comment>
<comment type="tissue specificity">
    <text evidence="7 8 9 10">Highly expressed in oocytes (at protein level).</text>
</comment>
<comment type="disruption phenotype">
    <text evidence="7 8 9 10">Female mice are infertile, whereas male fertility is not affected. Oocytes display impaired early embryogenesis, defective progression to meiosis II and disrupted assembly of P-body-like granules. Show a reduction in the extent of mRNA storage in germinal vesicle oocytes, as well as an aberrant mRNA clearance during meiotic maturation of oocytes (PubMed:37083226, PubMed:37481122, PubMed:37578641, PubMed:37889087). Primordial follicle assembly is severely compromised in ovaries (PubMed:37578641).</text>
</comment>
<comment type="similarity">
    <text evidence="13">Belongs to the LSM14 family.</text>
</comment>
<comment type="sequence caution" evidence="13">
    <conflict type="erroneous initiation">
        <sequence resource="EMBL-CDS" id="AAH40823"/>
    </conflict>
    <text>Extended N-terminus.</text>
</comment>
<reference key="1">
    <citation type="journal article" date="2009" name="PLoS Biol.">
        <title>Lineage-specific biology revealed by a finished genome assembly of the mouse.</title>
        <authorList>
            <person name="Church D.M."/>
            <person name="Goodstadt L."/>
            <person name="Hillier L.W."/>
            <person name="Zody M.C."/>
            <person name="Goldstein S."/>
            <person name="She X."/>
            <person name="Bult C.J."/>
            <person name="Agarwala R."/>
            <person name="Cherry J.L."/>
            <person name="DiCuccio M."/>
            <person name="Hlavina W."/>
            <person name="Kapustin Y."/>
            <person name="Meric P."/>
            <person name="Maglott D."/>
            <person name="Birtle Z."/>
            <person name="Marques A.C."/>
            <person name="Graves T."/>
            <person name="Zhou S."/>
            <person name="Teague B."/>
            <person name="Potamousis K."/>
            <person name="Churas C."/>
            <person name="Place M."/>
            <person name="Herschleb J."/>
            <person name="Runnheim R."/>
            <person name="Forrest D."/>
            <person name="Amos-Landgraf J."/>
            <person name="Schwartz D.C."/>
            <person name="Cheng Z."/>
            <person name="Lindblad-Toh K."/>
            <person name="Eichler E.E."/>
            <person name="Ponting C.P."/>
        </authorList>
    </citation>
    <scope>NUCLEOTIDE SEQUENCE [LARGE SCALE GENOMIC DNA]</scope>
    <source>
        <strain>C57BL/6J</strain>
    </source>
</reference>
<reference key="2">
    <citation type="journal article" date="2004" name="Genome Res.">
        <title>The status, quality, and expansion of the NIH full-length cDNA project: the Mammalian Gene Collection (MGC).</title>
        <authorList>
            <consortium name="The MGC Project Team"/>
        </authorList>
    </citation>
    <scope>NUCLEOTIDE SEQUENCE [LARGE SCALE MRNA]</scope>
    <source>
        <strain>FVB/N</strain>
        <tissue>Mammary tumor</tissue>
    </source>
</reference>
<reference key="3">
    <citation type="journal article" date="2009" name="Int. J. Biochem. Cell Biol.">
        <title>RAP55: insights into an evolutionarily conserved protein family.</title>
        <authorList>
            <person name="Marnef A."/>
            <person name="Sommerville J."/>
            <person name="Ladomery M.R."/>
        </authorList>
    </citation>
    <scope>REVIEW</scope>
</reference>
<reference key="4">
    <citation type="journal article" date="2010" name="Cell">
        <title>A tissue-specific atlas of mouse protein phosphorylation and expression.</title>
        <authorList>
            <person name="Huttlin E.L."/>
            <person name="Jedrychowski M.P."/>
            <person name="Elias J.E."/>
            <person name="Goswami T."/>
            <person name="Rad R."/>
            <person name="Beausoleil S.A."/>
            <person name="Villen J."/>
            <person name="Haas W."/>
            <person name="Sowa M.E."/>
            <person name="Gygi S.P."/>
        </authorList>
    </citation>
    <scope>IDENTIFICATION BY MASS SPECTROMETRY [LARGE SCALE ANALYSIS]</scope>
    <source>
        <tissue>Testis</tissue>
    </source>
</reference>
<reference key="5">
    <citation type="journal article" date="2014" name="Mol. Cell. Proteomics">
        <title>Immunoaffinity enrichment and mass spectrometry analysis of protein methylation.</title>
        <authorList>
            <person name="Guo A."/>
            <person name="Gu H."/>
            <person name="Zhou J."/>
            <person name="Mulhern D."/>
            <person name="Wang Y."/>
            <person name="Lee K.A."/>
            <person name="Yang V."/>
            <person name="Aguiar M."/>
            <person name="Kornhauser J."/>
            <person name="Jia X."/>
            <person name="Ren J."/>
            <person name="Beausoleil S.A."/>
            <person name="Silva J.C."/>
            <person name="Vemulapalli V."/>
            <person name="Bedford M.T."/>
            <person name="Comb M.J."/>
        </authorList>
    </citation>
    <scope>METHYLATION [LARGE SCALE ANALYSIS] AT ARG-351</scope>
    <scope>IDENTIFICATION BY MASS SPECTROMETRY [LARGE SCALE ANALYSIS]</scope>
    <source>
        <tissue>Embryo</tissue>
    </source>
</reference>
<reference key="6">
    <citation type="journal article" date="2017" name="J. Reprod. Dev.">
        <title>RNA-associated protein LSM family member 14 controls oocyte meiotic maturation through regulating mRNA pools.</title>
        <authorList>
            <person name="Zhang T."/>
            <person name="Li Y."/>
            <person name="Li H."/>
            <person name="Ma X.S."/>
            <person name="Ouyang Y.C."/>
            <person name="Hou Y."/>
            <person name="Schatten H."/>
            <person name="Sun Q.Y."/>
        </authorList>
    </citation>
    <scope>FUNCTION</scope>
</reference>
<reference key="7">
    <citation type="journal article" date="2023" name="Adv. Sci.">
        <title>LSM14B is an Oocyte-Specific RNA-Binding Protein Indispensable for Maternal mRNA Metabolism and Oocyte Development in Mice.</title>
        <authorList>
            <person name="Li H."/>
            <person name="Zhao H."/>
            <person name="Yang C."/>
            <person name="Su R."/>
            <person name="Long M."/>
            <person name="Liu J."/>
            <person name="Shi L."/>
            <person name="Xue Y."/>
            <person name="Su Y.Q."/>
        </authorList>
    </citation>
    <scope>FUNCTION</scope>
    <scope>DISRUPTION PHENOTYPE</scope>
    <scope>SUBUNIT</scope>
    <scope>SUBCELLULAR LOCATION</scope>
    <scope>TISSUE SPECIFICITY</scope>
</reference>
<reference key="8">
    <citation type="journal article" date="2023" name="Cell. Mol. Life Sci.">
        <title>LSM14B controls oocyte mRNA storage and stability to ensure female fertility.</title>
        <authorList>
            <person name="Shan L.Y."/>
            <person name="Tian Y."/>
            <person name="Liu W.X."/>
            <person name="Fan H.T."/>
            <person name="Li F.G."/>
            <person name="Liu W.J."/>
            <person name="Li A."/>
            <person name="Shen W."/>
            <person name="Sun Q.Y."/>
            <person name="Liu Y.B."/>
            <person name="Zhou Y."/>
            <person name="Zhang T."/>
        </authorList>
    </citation>
    <scope>FUNCTION</scope>
    <scope>DISRUPTION PHENOTYPE</scope>
    <scope>SUBCELLULAR LOCATION</scope>
    <scope>TISSUE SPECIFICITY</scope>
</reference>
<reference key="9">
    <citation type="journal article" date="2023" name="Nucleic Acids Res.">
        <title>LSM14B is essential for oocyte meiotic maturation by regulating maternal mRNA storage and clearance.</title>
        <authorList>
            <person name="Wan Y."/>
            <person name="Yang S."/>
            <person name="Li T."/>
            <person name="Cai Y."/>
            <person name="Wu X."/>
            <person name="Zhang M."/>
            <person name="Muhammad T."/>
            <person name="Huang T."/>
            <person name="Lv Y."/>
            <person name="Chan W.Y."/>
            <person name="Lu G."/>
            <person name="Li J."/>
            <person name="Sha Q.Q."/>
            <person name="Chen Z.J."/>
            <person name="Liu H."/>
        </authorList>
    </citation>
    <scope>FUNCTION</scope>
    <scope>DISRUPTION PHENOTYPE</scope>
    <scope>SUBCELLULAR LOCATION</scope>
    <scope>TISSUE SPECIFICITY</scope>
</reference>
<reference key="10">
    <citation type="journal article" date="2024" name="J. Genet. Genomics">
        <title>LSM14B coordinates protein component expression in the P-body and controls oocyte maturation.</title>
        <authorList>
            <person name="Zhang H."/>
            <person name="Zhang T."/>
            <person name="Wan X."/>
            <person name="Chen C."/>
            <person name="Wang S."/>
            <person name="Qin D."/>
            <person name="Li L."/>
            <person name="Yu L."/>
            <person name="Wu X."/>
        </authorList>
    </citation>
    <scope>FUNCTION</scope>
    <scope>DISRUPTION PHENOTYPE</scope>
    <scope>TISSUE SPECIFICITY</scope>
</reference>
<feature type="initiator methionine" description="Removed" evidence="2">
    <location>
        <position position="1"/>
    </location>
</feature>
<feature type="chain" id="PRO_0000187094" description="Protein LSM14 homolog B">
    <location>
        <begin position="2"/>
        <end position="385"/>
    </location>
</feature>
<feature type="domain" description="Sm" evidence="4">
    <location>
        <begin position="2"/>
        <end position="83"/>
    </location>
</feature>
<feature type="domain" description="DFDF" evidence="3">
    <location>
        <begin position="241"/>
        <end position="277"/>
    </location>
</feature>
<feature type="region of interest" description="Disordered" evidence="5">
    <location>
        <begin position="180"/>
        <end position="248"/>
    </location>
</feature>
<feature type="region of interest" description="Disordered" evidence="5">
    <location>
        <begin position="357"/>
        <end position="385"/>
    </location>
</feature>
<feature type="short sequence motif" description="FFD box">
    <location>
        <begin position="310"/>
        <end position="326"/>
    </location>
</feature>
<feature type="short sequence motif" description="TFG box">
    <location>
        <begin position="330"/>
        <end position="350"/>
    </location>
</feature>
<feature type="compositionally biased region" description="Polar residues" evidence="5">
    <location>
        <begin position="180"/>
        <end position="196"/>
    </location>
</feature>
<feature type="compositionally biased region" description="Basic residues" evidence="5">
    <location>
        <begin position="219"/>
        <end position="235"/>
    </location>
</feature>
<feature type="modified residue" description="N-acetylserine" evidence="2">
    <location>
        <position position="2"/>
    </location>
</feature>
<feature type="modified residue" description="Phosphoserine" evidence="2">
    <location>
        <position position="106"/>
    </location>
</feature>
<feature type="modified residue" description="Phosphoserine" evidence="2">
    <location>
        <position position="115"/>
    </location>
</feature>
<feature type="modified residue" description="Phosphoserine" evidence="2">
    <location>
        <position position="154"/>
    </location>
</feature>
<feature type="modified residue" description="Phosphoserine" evidence="2">
    <location>
        <position position="165"/>
    </location>
</feature>
<feature type="modified residue" description="Phosphoserine" evidence="2">
    <location>
        <position position="329"/>
    </location>
</feature>
<feature type="modified residue" description="Phosphoserine" evidence="2">
    <location>
        <position position="349"/>
    </location>
</feature>
<feature type="modified residue" description="Omega-N-methylarginine" evidence="15">
    <location>
        <position position="351"/>
    </location>
</feature>
<feature type="cross-link" description="Glycyl lysine isopeptide (Lys-Gly) (interchain with G-Cter in SUMO2)" evidence="2">
    <location>
        <position position="248"/>
    </location>
</feature>
<feature type="sequence conflict" description="In Ref. 2; AAH40823." evidence="13" ref="2">
    <original>A</original>
    <variation>T</variation>
    <location>
        <position position="294"/>
    </location>
</feature>
<dbReference type="EMBL" id="AL663067">
    <property type="status" value="NOT_ANNOTATED_CDS"/>
    <property type="molecule type" value="Genomic_DNA"/>
</dbReference>
<dbReference type="EMBL" id="BC040823">
    <property type="protein sequence ID" value="AAH40823.1"/>
    <property type="status" value="ALT_INIT"/>
    <property type="molecule type" value="mRNA"/>
</dbReference>
<dbReference type="CCDS" id="CCDS17165.2"/>
<dbReference type="RefSeq" id="NP_808395.2">
    <property type="nucleotide sequence ID" value="NM_177727.5"/>
</dbReference>
<dbReference type="SMR" id="Q8CGC4"/>
<dbReference type="BioGRID" id="232352">
    <property type="interactions" value="2"/>
</dbReference>
<dbReference type="FunCoup" id="Q8CGC4">
    <property type="interactions" value="3342"/>
</dbReference>
<dbReference type="IntAct" id="Q8CGC4">
    <property type="interactions" value="1"/>
</dbReference>
<dbReference type="STRING" id="10090.ENSMUSP00000055036"/>
<dbReference type="GlyGen" id="Q8CGC4">
    <property type="glycosylation" value="2 sites, 1 N-linked glycan (1 site), 1 O-linked glycan (1 site)"/>
</dbReference>
<dbReference type="iPTMnet" id="Q8CGC4"/>
<dbReference type="PhosphoSitePlus" id="Q8CGC4"/>
<dbReference type="SwissPalm" id="Q8CGC4"/>
<dbReference type="jPOST" id="Q8CGC4"/>
<dbReference type="PaxDb" id="10090-ENSMUSP00000055036"/>
<dbReference type="PeptideAtlas" id="Q8CGC4"/>
<dbReference type="ProteomicsDB" id="252534"/>
<dbReference type="Pumba" id="Q8CGC4"/>
<dbReference type="Antibodypedia" id="52743">
    <property type="antibodies" value="61 antibodies from 12 providers"/>
</dbReference>
<dbReference type="DNASU" id="241846"/>
<dbReference type="Ensembl" id="ENSMUST00000055485.12">
    <property type="protein sequence ID" value="ENSMUSP00000055036.6"/>
    <property type="gene ID" value="ENSMUSG00000039108.15"/>
</dbReference>
<dbReference type="GeneID" id="241846"/>
<dbReference type="KEGG" id="mmu:241846"/>
<dbReference type="UCSC" id="uc008ohy.1">
    <property type="organism name" value="mouse"/>
</dbReference>
<dbReference type="AGR" id="MGI:3040677"/>
<dbReference type="CTD" id="149986"/>
<dbReference type="MGI" id="MGI:3040677">
    <property type="gene designation" value="Lsm14b"/>
</dbReference>
<dbReference type="VEuPathDB" id="HostDB:ENSMUSG00000039108"/>
<dbReference type="eggNOG" id="KOG1073">
    <property type="taxonomic scope" value="Eukaryota"/>
</dbReference>
<dbReference type="GeneTree" id="ENSGT00940000156010"/>
<dbReference type="HOGENOM" id="CLU_019221_0_0_1"/>
<dbReference type="InParanoid" id="Q8CGC4"/>
<dbReference type="OMA" id="PPKEEIY"/>
<dbReference type="OrthoDB" id="21539at2759"/>
<dbReference type="PhylomeDB" id="Q8CGC4"/>
<dbReference type="TreeFam" id="TF313514"/>
<dbReference type="BioGRID-ORCS" id="241846">
    <property type="hits" value="1 hit in 80 CRISPR screens"/>
</dbReference>
<dbReference type="CD-CODE" id="089DA44D">
    <property type="entry name" value="MARDO"/>
</dbReference>
<dbReference type="PRO" id="PR:Q8CGC4"/>
<dbReference type="Proteomes" id="UP000000589">
    <property type="component" value="Chromosome 2"/>
</dbReference>
<dbReference type="RNAct" id="Q8CGC4">
    <property type="molecule type" value="protein"/>
</dbReference>
<dbReference type="Bgee" id="ENSMUSG00000039108">
    <property type="expression patterns" value="Expressed in secondary oocyte and 258 other cell types or tissues"/>
</dbReference>
<dbReference type="ExpressionAtlas" id="Q8CGC4">
    <property type="expression patterns" value="baseline and differential"/>
</dbReference>
<dbReference type="GO" id="GO:0036464">
    <property type="term" value="C:cytoplasmic ribonucleoprotein granule"/>
    <property type="evidence" value="ECO:0000314"/>
    <property type="project" value="UniProtKB"/>
</dbReference>
<dbReference type="GO" id="GO:1990904">
    <property type="term" value="C:ribonucleoprotein complex"/>
    <property type="evidence" value="ECO:0007669"/>
    <property type="project" value="UniProtKB-KW"/>
</dbReference>
<dbReference type="GO" id="GO:0003723">
    <property type="term" value="F:RNA binding"/>
    <property type="evidence" value="ECO:0000314"/>
    <property type="project" value="UniProtKB"/>
</dbReference>
<dbReference type="GO" id="GO:0141065">
    <property type="term" value="P:maternal mRNA clearance"/>
    <property type="evidence" value="ECO:0000315"/>
    <property type="project" value="UniProtKB"/>
</dbReference>
<dbReference type="GO" id="GO:1903537">
    <property type="term" value="P:meiotic cell cycle process involved in oocyte maturation"/>
    <property type="evidence" value="ECO:0000315"/>
    <property type="project" value="UniProtKB"/>
</dbReference>
<dbReference type="GO" id="GO:0140694">
    <property type="term" value="P:membraneless organelle assembly"/>
    <property type="evidence" value="ECO:0000315"/>
    <property type="project" value="UniProtKB"/>
</dbReference>
<dbReference type="GO" id="GO:0048477">
    <property type="term" value="P:oogenesis"/>
    <property type="evidence" value="ECO:0000315"/>
    <property type="project" value="UniProtKB"/>
</dbReference>
<dbReference type="GO" id="GO:0001541">
    <property type="term" value="P:ovarian follicle development"/>
    <property type="evidence" value="ECO:0000315"/>
    <property type="project" value="UniProtKB"/>
</dbReference>
<dbReference type="GO" id="GO:0006417">
    <property type="term" value="P:regulation of translation"/>
    <property type="evidence" value="ECO:0007669"/>
    <property type="project" value="UniProtKB-KW"/>
</dbReference>
<dbReference type="CDD" id="cd01736">
    <property type="entry name" value="LSm14_N"/>
    <property type="match status" value="1"/>
</dbReference>
<dbReference type="FunFam" id="2.30.30.100:FF:000006">
    <property type="entry name" value="Protein LSM14 homolog A isoform b"/>
    <property type="match status" value="1"/>
</dbReference>
<dbReference type="Gene3D" id="2.30.30.100">
    <property type="match status" value="1"/>
</dbReference>
<dbReference type="InterPro" id="IPR025762">
    <property type="entry name" value="DFDF"/>
</dbReference>
<dbReference type="InterPro" id="IPR019050">
    <property type="entry name" value="FDF_dom"/>
</dbReference>
<dbReference type="InterPro" id="IPR025761">
    <property type="entry name" value="FFD_box"/>
</dbReference>
<dbReference type="InterPro" id="IPR025609">
    <property type="entry name" value="Lsm14-like_N"/>
</dbReference>
<dbReference type="InterPro" id="IPR010920">
    <property type="entry name" value="LSM_dom_sf"/>
</dbReference>
<dbReference type="InterPro" id="IPR047575">
    <property type="entry name" value="Sm"/>
</dbReference>
<dbReference type="InterPro" id="IPR025768">
    <property type="entry name" value="TFG_box"/>
</dbReference>
<dbReference type="PANTHER" id="PTHR13586:SF1">
    <property type="entry name" value="PROTEIN LSM14 HOMOLOG B"/>
    <property type="match status" value="1"/>
</dbReference>
<dbReference type="PANTHER" id="PTHR13586">
    <property type="entry name" value="SCD6 PROTEIN-RELATED"/>
    <property type="match status" value="1"/>
</dbReference>
<dbReference type="Pfam" id="PF09532">
    <property type="entry name" value="FDF"/>
    <property type="match status" value="1"/>
</dbReference>
<dbReference type="Pfam" id="PF12701">
    <property type="entry name" value="LSM14"/>
    <property type="match status" value="1"/>
</dbReference>
<dbReference type="SMART" id="SM01199">
    <property type="entry name" value="FDF"/>
    <property type="match status" value="1"/>
</dbReference>
<dbReference type="SMART" id="SM01271">
    <property type="entry name" value="LSM14"/>
    <property type="match status" value="1"/>
</dbReference>
<dbReference type="SUPFAM" id="SSF50182">
    <property type="entry name" value="Sm-like ribonucleoproteins"/>
    <property type="match status" value="1"/>
</dbReference>
<dbReference type="PROSITE" id="PS51512">
    <property type="entry name" value="DFDF"/>
    <property type="match status" value="1"/>
</dbReference>
<dbReference type="PROSITE" id="PS51513">
    <property type="entry name" value="FFD"/>
    <property type="match status" value="1"/>
</dbReference>
<dbReference type="PROSITE" id="PS52002">
    <property type="entry name" value="SM"/>
    <property type="match status" value="1"/>
</dbReference>
<dbReference type="PROSITE" id="PS51536">
    <property type="entry name" value="TFG"/>
    <property type="match status" value="1"/>
</dbReference>
<keyword id="KW-0007">Acetylation</keyword>
<keyword id="KW-0963">Cytoplasm</keyword>
<keyword id="KW-0217">Developmental protein</keyword>
<keyword id="KW-0221">Differentiation</keyword>
<keyword id="KW-1017">Isopeptide bond</keyword>
<keyword id="KW-0469">Meiosis</keyword>
<keyword id="KW-0488">Methylation</keyword>
<keyword id="KW-0896">Oogenesis</keyword>
<keyword id="KW-0597">Phosphoprotein</keyword>
<keyword id="KW-1185">Reference proteome</keyword>
<keyword id="KW-0687">Ribonucleoprotein</keyword>
<keyword id="KW-0694">RNA-binding</keyword>
<keyword id="KW-0810">Translation regulation</keyword>
<keyword id="KW-0832">Ubl conjugation</keyword>
<protein>
    <recommendedName>
        <fullName evidence="12">Protein LSM14 homolog B</fullName>
    </recommendedName>
    <alternativeName>
        <fullName evidence="11">RNA-associated protein 55B</fullName>
        <shortName evidence="11">mRAP55B</shortName>
    </alternativeName>
</protein>
<evidence type="ECO:0000250" key="1">
    <source>
        <dbReference type="UniProtKB" id="Q68FI1"/>
    </source>
</evidence>
<evidence type="ECO:0000250" key="2">
    <source>
        <dbReference type="UniProtKB" id="Q9BX40"/>
    </source>
</evidence>
<evidence type="ECO:0000255" key="3">
    <source>
        <dbReference type="PROSITE-ProRule" id="PRU00845"/>
    </source>
</evidence>
<evidence type="ECO:0000255" key="4">
    <source>
        <dbReference type="PROSITE-ProRule" id="PRU01346"/>
    </source>
</evidence>
<evidence type="ECO:0000256" key="5">
    <source>
        <dbReference type="SAM" id="MobiDB-lite"/>
    </source>
</evidence>
<evidence type="ECO:0000269" key="6">
    <source>
    </source>
</evidence>
<evidence type="ECO:0000269" key="7">
    <source>
    </source>
</evidence>
<evidence type="ECO:0000269" key="8">
    <source>
    </source>
</evidence>
<evidence type="ECO:0000269" key="9">
    <source>
    </source>
</evidence>
<evidence type="ECO:0000269" key="10">
    <source>
    </source>
</evidence>
<evidence type="ECO:0000303" key="11">
    <source>
    </source>
</evidence>
<evidence type="ECO:0000303" key="12">
    <source>
    </source>
</evidence>
<evidence type="ECO:0000305" key="13"/>
<evidence type="ECO:0000312" key="14">
    <source>
        <dbReference type="MGI" id="MGI:3040677"/>
    </source>
</evidence>
<evidence type="ECO:0007744" key="15">
    <source>
    </source>
</evidence>
<organism>
    <name type="scientific">Mus musculus</name>
    <name type="common">Mouse</name>
    <dbReference type="NCBI Taxonomy" id="10090"/>
    <lineage>
        <taxon>Eukaryota</taxon>
        <taxon>Metazoa</taxon>
        <taxon>Chordata</taxon>
        <taxon>Craniata</taxon>
        <taxon>Vertebrata</taxon>
        <taxon>Euteleostomi</taxon>
        <taxon>Mammalia</taxon>
        <taxon>Eutheria</taxon>
        <taxon>Euarchontoglires</taxon>
        <taxon>Glires</taxon>
        <taxon>Rodentia</taxon>
        <taxon>Myomorpha</taxon>
        <taxon>Muroidea</taxon>
        <taxon>Muridae</taxon>
        <taxon>Murinae</taxon>
        <taxon>Mus</taxon>
        <taxon>Mus</taxon>
    </lineage>
</organism>
<name>LS14B_MOUSE</name>
<gene>
    <name evidence="12 14" type="primary">Lsm14b</name>
    <name type="synonym">Fam61b</name>
    <name evidence="11" type="synonym">Rap55b</name>
</gene>
<proteinExistence type="evidence at protein level"/>
<sequence length="385" mass="42310">MSGSSGTPYLGSKISLISKAQIRYEGILYTIDTDNSTVALAKVRSFGTEDRPTDRPAPPREEIYEYIIFRGSDIKDITVCEPPKAQHTLPQDPAIVQSSLGSASASPFQPHVPYSPFRGMPPYGQLAASSLLSQQYAASLGLGAGFPSTPVGKSPMVEQAVQTSSVDNLNAKKLLPSKVTSATQLNGRQAQPSSKPASDVVQPAPVHTQGQVNDENRRPPRRRSGNRRTRNRSRGQNRPTNVKENTIKFEGDFDFESANAQFNREELDKEFKKKLNFKDDKADKGEEKDPAVMAQSEETAAEEDLLGPNCYYDKSKSFFDNISSELKTSSRRTTWAEERKLNTETFGVSGRFLRGRSSRGGFRGGRGNGTTRRNPTSHRAGTGRV</sequence>